<reference key="1">
    <citation type="journal article" date="1992" name="J. Gen. Virol.">
        <title>Identification of homologues to the human cytomegalovirus US22 gene family in human herpesvirus 6.</title>
        <authorList>
            <person name="Efstathiou S."/>
            <person name="Lawrence G.L."/>
            <person name="Brown C.M."/>
            <person name="Barrell B.G."/>
        </authorList>
    </citation>
    <scope>NUCLEOTIDE SEQUENCE [GENOMIC DNA]</scope>
</reference>
<reference key="2">
    <citation type="journal article" date="1995" name="Virology">
        <title>The DNA sequence of human herpesvirus-6: structure, coding content, and genome evolution.</title>
        <authorList>
            <person name="Gompels U.A."/>
            <person name="Nicholas J."/>
            <person name="Lawrence G.L."/>
            <person name="Jones M."/>
            <person name="Thomson B.J."/>
            <person name="Martin M.E.D."/>
            <person name="Efstathiou S."/>
            <person name="Craxton M.A."/>
            <person name="Macaulay H.A."/>
        </authorList>
    </citation>
    <scope>NUCLEOTIDE SEQUENCE [LARGE SCALE GENOMIC DNA]</scope>
</reference>
<feature type="chain" id="PRO_0000116308" description="Protein U4">
    <location>
        <begin position="1"/>
        <end position="535"/>
    </location>
</feature>
<name>VU4_HHV6U</name>
<proteinExistence type="inferred from homology"/>
<evidence type="ECO:0000305" key="1"/>
<comment type="similarity">
    <text evidence="1">Belongs to the herpesviridae U4 family.</text>
</comment>
<dbReference type="EMBL" id="D10082">
    <property type="protein sequence ID" value="BAA00978.1"/>
    <property type="molecule type" value="Genomic_DNA"/>
</dbReference>
<dbReference type="EMBL" id="X83413">
    <property type="protein sequence ID" value="CAA58431.1"/>
    <property type="molecule type" value="Genomic_DNA"/>
</dbReference>
<dbReference type="PIR" id="JQ1649">
    <property type="entry name" value="JQ1649"/>
</dbReference>
<dbReference type="RefSeq" id="NP_042895.1">
    <property type="nucleotide sequence ID" value="NC_001664.2"/>
</dbReference>
<dbReference type="DNASU" id="1487885"/>
<dbReference type="GeneID" id="1487885"/>
<dbReference type="KEGG" id="vg:1487885"/>
<dbReference type="Proteomes" id="UP000009295">
    <property type="component" value="Segment"/>
</dbReference>
<accession>Q01351</accession>
<sequence length="535" mass="61961">MELLDHDIYKGPVRERVTYTIPNHPYLSLTVHHSRELDVDLKDITEEMIIDSGTLTAEDLFMTRGLRFCDDSVLWAALAEKVSVEFQRRGKTTMDLSAFMSLLERLTFEDETSVFYRLLTKCTALAHFSILEYIVDGEKRDTISAHFNRLLELLDSLFLQFLMLRNRSESNTLLTLFDILPNPKEIYGDAASPTSVLLKHFLSDHIFVAYASSYRFVSSVLCSCDQCRASLFRIYLGKKDSRAVHISDISEFDPADLILGQLHLDAREAVALRAEIDRDLGSSLILNSMERRHLPILHDKQLGRGHFERNILKVYCNIVLCLFLLRRVKQRIVSDLTAIARFFVKAISEMERCIDTVSGLRGVRIKLLVVSSQFEIKDPMRVPRLCFFFLEIVAILVSGYDKERHRVRALLEHLCLKKICLGDLCASMRLAREIRHDVLEGFLNTLELSYMSNPVRFFRFHDCNLYGTHMWSGVYPNVVPYAVRGGGSFDIRLQEHRRRQKRIVVRRRLIRRVQQRGLDIREARRVPKPACVTFI</sequence>
<organismHost>
    <name type="scientific">Homo sapiens</name>
    <name type="common">Human</name>
    <dbReference type="NCBI Taxonomy" id="9606"/>
</organismHost>
<protein>
    <recommendedName>
        <fullName>Protein U4</fullName>
    </recommendedName>
</protein>
<gene>
    <name type="primary">U4</name>
    <name type="synonym">SHL3</name>
</gene>
<keyword id="KW-1185">Reference proteome</keyword>
<organism>
    <name type="scientific">Human herpesvirus 6A (strain Uganda-1102)</name>
    <name type="common">HHV-6 variant A</name>
    <name type="synonym">Human B lymphotropic virus</name>
    <dbReference type="NCBI Taxonomy" id="10370"/>
    <lineage>
        <taxon>Viruses</taxon>
        <taxon>Duplodnaviria</taxon>
        <taxon>Heunggongvirae</taxon>
        <taxon>Peploviricota</taxon>
        <taxon>Herviviricetes</taxon>
        <taxon>Herpesvirales</taxon>
        <taxon>Orthoherpesviridae</taxon>
        <taxon>Betaherpesvirinae</taxon>
        <taxon>Roseolovirus</taxon>
        <taxon>Roseolovirus humanbeta6a</taxon>
        <taxon>Human betaherpesvirus 6A</taxon>
    </lineage>
</organism>